<name>ACCD_COXBR</name>
<accession>A9ND23</accession>
<gene>
    <name evidence="1" type="primary">accD</name>
    <name type="ordered locus">COXBURSA331_A1054</name>
</gene>
<organism>
    <name type="scientific">Coxiella burnetii (strain RSA 331 / Henzerling II)</name>
    <dbReference type="NCBI Taxonomy" id="360115"/>
    <lineage>
        <taxon>Bacteria</taxon>
        <taxon>Pseudomonadati</taxon>
        <taxon>Pseudomonadota</taxon>
        <taxon>Gammaproteobacteria</taxon>
        <taxon>Legionellales</taxon>
        <taxon>Coxiellaceae</taxon>
        <taxon>Coxiella</taxon>
    </lineage>
</organism>
<dbReference type="EC" id="2.1.3.15" evidence="1"/>
<dbReference type="EMBL" id="CP000890">
    <property type="protein sequence ID" value="ABX77295.1"/>
    <property type="molecule type" value="Genomic_DNA"/>
</dbReference>
<dbReference type="RefSeq" id="WP_010957871.1">
    <property type="nucleotide sequence ID" value="NC_010117.1"/>
</dbReference>
<dbReference type="SMR" id="A9ND23"/>
<dbReference type="KEGG" id="cbs:COXBURSA331_A1054"/>
<dbReference type="HOGENOM" id="CLU_015486_1_0_6"/>
<dbReference type="UniPathway" id="UPA00655">
    <property type="reaction ID" value="UER00711"/>
</dbReference>
<dbReference type="GO" id="GO:0009329">
    <property type="term" value="C:acetate CoA-transferase complex"/>
    <property type="evidence" value="ECO:0007669"/>
    <property type="project" value="TreeGrafter"/>
</dbReference>
<dbReference type="GO" id="GO:0003989">
    <property type="term" value="F:acetyl-CoA carboxylase activity"/>
    <property type="evidence" value="ECO:0007669"/>
    <property type="project" value="InterPro"/>
</dbReference>
<dbReference type="GO" id="GO:0005524">
    <property type="term" value="F:ATP binding"/>
    <property type="evidence" value="ECO:0007669"/>
    <property type="project" value="UniProtKB-KW"/>
</dbReference>
<dbReference type="GO" id="GO:0016743">
    <property type="term" value="F:carboxyl- or carbamoyltransferase activity"/>
    <property type="evidence" value="ECO:0007669"/>
    <property type="project" value="UniProtKB-UniRule"/>
</dbReference>
<dbReference type="GO" id="GO:0008270">
    <property type="term" value="F:zinc ion binding"/>
    <property type="evidence" value="ECO:0007669"/>
    <property type="project" value="UniProtKB-UniRule"/>
</dbReference>
<dbReference type="GO" id="GO:0006633">
    <property type="term" value="P:fatty acid biosynthetic process"/>
    <property type="evidence" value="ECO:0007669"/>
    <property type="project" value="UniProtKB-KW"/>
</dbReference>
<dbReference type="GO" id="GO:2001295">
    <property type="term" value="P:malonyl-CoA biosynthetic process"/>
    <property type="evidence" value="ECO:0007669"/>
    <property type="project" value="UniProtKB-UniRule"/>
</dbReference>
<dbReference type="Gene3D" id="3.90.226.10">
    <property type="entry name" value="2-enoyl-CoA Hydratase, Chain A, domain 1"/>
    <property type="match status" value="1"/>
</dbReference>
<dbReference type="HAMAP" id="MF_01395">
    <property type="entry name" value="AcetylCoA_CT_beta"/>
    <property type="match status" value="1"/>
</dbReference>
<dbReference type="InterPro" id="IPR034733">
    <property type="entry name" value="AcCoA_carboxyl_beta"/>
</dbReference>
<dbReference type="InterPro" id="IPR000438">
    <property type="entry name" value="Acetyl_CoA_COase_Trfase_b_su"/>
</dbReference>
<dbReference type="InterPro" id="IPR029045">
    <property type="entry name" value="ClpP/crotonase-like_dom_sf"/>
</dbReference>
<dbReference type="InterPro" id="IPR011762">
    <property type="entry name" value="COA_CT_N"/>
</dbReference>
<dbReference type="InterPro" id="IPR041010">
    <property type="entry name" value="Znf-ACC"/>
</dbReference>
<dbReference type="NCBIfam" id="TIGR00515">
    <property type="entry name" value="accD"/>
    <property type="match status" value="1"/>
</dbReference>
<dbReference type="PANTHER" id="PTHR42995">
    <property type="entry name" value="ACETYL-COENZYME A CARBOXYLASE CARBOXYL TRANSFERASE SUBUNIT BETA, CHLOROPLASTIC"/>
    <property type="match status" value="1"/>
</dbReference>
<dbReference type="PANTHER" id="PTHR42995:SF5">
    <property type="entry name" value="ACETYL-COENZYME A CARBOXYLASE CARBOXYL TRANSFERASE SUBUNIT BETA, CHLOROPLASTIC"/>
    <property type="match status" value="1"/>
</dbReference>
<dbReference type="Pfam" id="PF01039">
    <property type="entry name" value="Carboxyl_trans"/>
    <property type="match status" value="1"/>
</dbReference>
<dbReference type="Pfam" id="PF17848">
    <property type="entry name" value="Zn_ribbon_ACC"/>
    <property type="match status" value="1"/>
</dbReference>
<dbReference type="PRINTS" id="PR01070">
    <property type="entry name" value="ACCCTRFRASEB"/>
</dbReference>
<dbReference type="SUPFAM" id="SSF52096">
    <property type="entry name" value="ClpP/crotonase"/>
    <property type="match status" value="1"/>
</dbReference>
<dbReference type="PROSITE" id="PS50980">
    <property type="entry name" value="COA_CT_NTER"/>
    <property type="match status" value="1"/>
</dbReference>
<feature type="chain" id="PRO_0000358977" description="Acetyl-coenzyme A carboxylase carboxyl transferase subunit beta">
    <location>
        <begin position="1"/>
        <end position="291"/>
    </location>
</feature>
<feature type="domain" description="CoA carboxyltransferase N-terminal" evidence="2">
    <location>
        <begin position="23"/>
        <end position="291"/>
    </location>
</feature>
<feature type="zinc finger region" description="C4-type" evidence="1">
    <location>
        <begin position="27"/>
        <end position="49"/>
    </location>
</feature>
<feature type="binding site" evidence="1">
    <location>
        <position position="27"/>
    </location>
    <ligand>
        <name>Zn(2+)</name>
        <dbReference type="ChEBI" id="CHEBI:29105"/>
    </ligand>
</feature>
<feature type="binding site" evidence="1">
    <location>
        <position position="30"/>
    </location>
    <ligand>
        <name>Zn(2+)</name>
        <dbReference type="ChEBI" id="CHEBI:29105"/>
    </ligand>
</feature>
<feature type="binding site" evidence="1">
    <location>
        <position position="46"/>
    </location>
    <ligand>
        <name>Zn(2+)</name>
        <dbReference type="ChEBI" id="CHEBI:29105"/>
    </ligand>
</feature>
<feature type="binding site" evidence="1">
    <location>
        <position position="49"/>
    </location>
    <ligand>
        <name>Zn(2+)</name>
        <dbReference type="ChEBI" id="CHEBI:29105"/>
    </ligand>
</feature>
<reference key="1">
    <citation type="submission" date="2007-11" db="EMBL/GenBank/DDBJ databases">
        <title>Genome sequencing of phylogenetically and phenotypically diverse Coxiella burnetii isolates.</title>
        <authorList>
            <person name="Seshadri R."/>
            <person name="Samuel J.E."/>
        </authorList>
    </citation>
    <scope>NUCLEOTIDE SEQUENCE [LARGE SCALE GENOMIC DNA]</scope>
    <source>
        <strain>RSA 331 / Henzerling II</strain>
    </source>
</reference>
<sequence length="291" mass="32231">MNWFTKLLPKISTANKKGVPEGVWHKCPSCTAVLYRVELERNLEVCPKCYYHIRLDPRKRLAQFLDEGEQEELAEDILPVDRLKFRDSKKYKDRLSAAQKATEEKEALVVYKGNIYGNPIVAAAFNFFFVGGSMGAAVGERFAAGVEAAISERLPFVCFSTSGGARMQEGLFSLFQMAKTSAVLARLAEYKLPYISVLTDPTMGGVSASLAMLGDVIIAEPNALIGFSGPRVIEQTIRQTLPEGFQRSEFLLEHGAIDMVVDRRELKSTIASLITKLTHQPPPDLPVEESV</sequence>
<comment type="function">
    <text evidence="1">Component of the acetyl coenzyme A carboxylase (ACC) complex. Biotin carboxylase (BC) catalyzes the carboxylation of biotin on its carrier protein (BCCP) and then the CO(2) group is transferred by the transcarboxylase to acetyl-CoA to form malonyl-CoA.</text>
</comment>
<comment type="catalytic activity">
    <reaction evidence="1">
        <text>N(6)-carboxybiotinyl-L-lysyl-[protein] + acetyl-CoA = N(6)-biotinyl-L-lysyl-[protein] + malonyl-CoA</text>
        <dbReference type="Rhea" id="RHEA:54728"/>
        <dbReference type="Rhea" id="RHEA-COMP:10505"/>
        <dbReference type="Rhea" id="RHEA-COMP:10506"/>
        <dbReference type="ChEBI" id="CHEBI:57288"/>
        <dbReference type="ChEBI" id="CHEBI:57384"/>
        <dbReference type="ChEBI" id="CHEBI:83144"/>
        <dbReference type="ChEBI" id="CHEBI:83145"/>
        <dbReference type="EC" id="2.1.3.15"/>
    </reaction>
</comment>
<comment type="cofactor">
    <cofactor evidence="1">
        <name>Zn(2+)</name>
        <dbReference type="ChEBI" id="CHEBI:29105"/>
    </cofactor>
    <text evidence="1">Binds 1 zinc ion per subunit.</text>
</comment>
<comment type="pathway">
    <text evidence="1">Lipid metabolism; malonyl-CoA biosynthesis; malonyl-CoA from acetyl-CoA: step 1/1.</text>
</comment>
<comment type="subunit">
    <text evidence="1">Acetyl-CoA carboxylase is a heterohexamer composed of biotin carboxyl carrier protein (AccB), biotin carboxylase (AccC) and two subunits each of ACCase subunit alpha (AccA) and ACCase subunit beta (AccD).</text>
</comment>
<comment type="subcellular location">
    <subcellularLocation>
        <location evidence="1">Cytoplasm</location>
    </subcellularLocation>
</comment>
<comment type="similarity">
    <text evidence="1">Belongs to the AccD/PCCB family.</text>
</comment>
<evidence type="ECO:0000255" key="1">
    <source>
        <dbReference type="HAMAP-Rule" id="MF_01395"/>
    </source>
</evidence>
<evidence type="ECO:0000255" key="2">
    <source>
        <dbReference type="PROSITE-ProRule" id="PRU01136"/>
    </source>
</evidence>
<proteinExistence type="inferred from homology"/>
<protein>
    <recommendedName>
        <fullName evidence="1">Acetyl-coenzyme A carboxylase carboxyl transferase subunit beta</fullName>
        <shortName evidence="1">ACCase subunit beta</shortName>
        <shortName evidence="1">Acetyl-CoA carboxylase carboxyltransferase subunit beta</shortName>
        <ecNumber evidence="1">2.1.3.15</ecNumber>
    </recommendedName>
</protein>
<keyword id="KW-0067">ATP-binding</keyword>
<keyword id="KW-0963">Cytoplasm</keyword>
<keyword id="KW-0275">Fatty acid biosynthesis</keyword>
<keyword id="KW-0276">Fatty acid metabolism</keyword>
<keyword id="KW-0444">Lipid biosynthesis</keyword>
<keyword id="KW-0443">Lipid metabolism</keyword>
<keyword id="KW-0479">Metal-binding</keyword>
<keyword id="KW-0547">Nucleotide-binding</keyword>
<keyword id="KW-0808">Transferase</keyword>
<keyword id="KW-0862">Zinc</keyword>
<keyword id="KW-0863">Zinc-finger</keyword>